<comment type="function">
    <text>May mediate cell differentiation events during embryonic development.</text>
</comment>
<comment type="subunit">
    <text evidence="1">Homodimer; disulfide-linked.</text>
</comment>
<comment type="subcellular location">
    <subcellularLocation>
        <location>Secreted</location>
    </subcellularLocation>
</comment>
<comment type="tissue specificity">
    <text>Expressed in the brain.</text>
</comment>
<comment type="disease" evidence="4">
    <disease id="DI-01424">
        <name>Conotruncal heart malformations</name>
        <acronym>CTHM</acronym>
        <description>A group of congenital heart defects involving the outflow tracts. Examples include truncus arteriosus communis, double-outlet right ventricle and transposition of great arteries. Truncus arteriosus communis is characterized by a single outflow tract instead of a separate aorta and pulmonary artery. In transposition of the great arteries, the aorta arises from the right ventricle and the pulmonary artery from the left ventricle. In double outlet of the right ventricle, both the pulmonary artery and aorta arise from the right ventricle.</description>
        <dbReference type="MIM" id="217095"/>
    </disease>
    <text>The disease is caused by variants affecting the gene represented in this entry.</text>
</comment>
<comment type="disease" evidence="4 7">
    <disease id="DI-03082">
        <name>Congenital heart defects, multiple types, 6</name>
        <acronym>CHTD6</acronym>
        <description>An autosomal dominant disorder characterized by congenital developmental abnormalities involving structures of the heart. Common defects include tetralogy of Fallot, transposition of the great arteries, double-outlet right ventricle, total anomalous pulmonary venous return, pulmonary stenosis or atresia, atrioventricular canal, ventricular septal defect, and hypoplastic left or right ventricle.</description>
        <dbReference type="MIM" id="613854"/>
    </disease>
    <text>The disease is caused by variants affecting the gene represented in this entry.</text>
</comment>
<comment type="disease" evidence="4">
    <disease id="DI-02362">
        <name>Tetralogy of Fallot</name>
        <acronym>TOF</acronym>
        <description>A congenital heart anomaly which consists of pulmonary stenosis, ventricular septal defect, dextroposition of the aorta (aorta is on the right side instead of the left) and hypertrophy of the right ventricle. In this condition, blood from both ventricles (oxygen-rich and oxygen-poor) is pumped into the body often causing cyanosis.</description>
        <dbReference type="MIM" id="187500"/>
    </disease>
    <text>The disease is caused by variants affecting the gene represented in this entry.</text>
</comment>
<comment type="disease" evidence="6 7">
    <disease id="DI-03896">
        <name>Right atrial isomerism</name>
        <acronym>RAI</acronym>
        <description>A severe complex congenital heart defect resulting from embryonic disruption of proper left-right axis determination. RAI is usually characterized by complete atrioventricular septal defect with a common atrium and univentricular AV connection, total anomalous pulmonary drainage, and transposition or malposition of the great arteries. Affected individuals present at birth with severe cardiac failure. Other associated abnormalities include bilateral trilobed lungs, midline liver, and asplenia, as well as situs inversus affecting other organs.</description>
        <dbReference type="MIM" id="208530"/>
    </disease>
    <text>The disease is caused by variants affecting the gene represented in this entry.</text>
</comment>
<comment type="miscellaneous">
    <text>This protein is produced by a bicistronic gene which also produces the CERS1 protein from a non-overlapping reading frame.</text>
</comment>
<comment type="similarity">
    <text evidence="8">Belongs to the TGF-beta family.</text>
</comment>
<evidence type="ECO:0000250" key="1"/>
<evidence type="ECO:0000255" key="2"/>
<evidence type="ECO:0000256" key="3">
    <source>
        <dbReference type="SAM" id="MobiDB-lite"/>
    </source>
</evidence>
<evidence type="ECO:0000269" key="4">
    <source>
    </source>
</evidence>
<evidence type="ECO:0000269" key="5">
    <source>
    </source>
</evidence>
<evidence type="ECO:0000269" key="6">
    <source>
    </source>
</evidence>
<evidence type="ECO:0000269" key="7">
    <source>
    </source>
</evidence>
<evidence type="ECO:0000305" key="8"/>
<keyword id="KW-0165">Cleavage on pair of basic residues</keyword>
<keyword id="KW-0202">Cytokine</keyword>
<keyword id="KW-0225">Disease variant</keyword>
<keyword id="KW-1015">Disulfide bond</keyword>
<keyword id="KW-0325">Glycoprotein</keyword>
<keyword id="KW-0339">Growth factor</keyword>
<keyword id="KW-1185">Reference proteome</keyword>
<keyword id="KW-0964">Secreted</keyword>
<keyword id="KW-0732">Signal</keyword>
<reference key="1">
    <citation type="journal article" date="1991" name="Proc. Natl. Acad. Sci. U.S.A.">
        <title>Expression of growth/differentiation factor 1 in the nervous system: conservation of a bicistronic structure.</title>
        <authorList>
            <person name="Lee S.-J."/>
        </authorList>
    </citation>
    <scope>NUCLEOTIDE SEQUENCE [MRNA]</scope>
    <scope>VARIANT VAL-118</scope>
</reference>
<reference key="2">
    <citation type="journal article" date="2004" name="Nature">
        <title>The DNA sequence and biology of human chromosome 19.</title>
        <authorList>
            <person name="Grimwood J."/>
            <person name="Gordon L.A."/>
            <person name="Olsen A.S."/>
            <person name="Terry A."/>
            <person name="Schmutz J."/>
            <person name="Lamerdin J.E."/>
            <person name="Hellsten U."/>
            <person name="Goodstein D."/>
            <person name="Couronne O."/>
            <person name="Tran-Gyamfi M."/>
            <person name="Aerts A."/>
            <person name="Altherr M."/>
            <person name="Ashworth L."/>
            <person name="Bajorek E."/>
            <person name="Black S."/>
            <person name="Branscomb E."/>
            <person name="Caenepeel S."/>
            <person name="Carrano A.V."/>
            <person name="Caoile C."/>
            <person name="Chan Y.M."/>
            <person name="Christensen M."/>
            <person name="Cleland C.A."/>
            <person name="Copeland A."/>
            <person name="Dalin E."/>
            <person name="Dehal P."/>
            <person name="Denys M."/>
            <person name="Detter J.C."/>
            <person name="Escobar J."/>
            <person name="Flowers D."/>
            <person name="Fotopulos D."/>
            <person name="Garcia C."/>
            <person name="Georgescu A.M."/>
            <person name="Glavina T."/>
            <person name="Gomez M."/>
            <person name="Gonzales E."/>
            <person name="Groza M."/>
            <person name="Hammon N."/>
            <person name="Hawkins T."/>
            <person name="Haydu L."/>
            <person name="Ho I."/>
            <person name="Huang W."/>
            <person name="Israni S."/>
            <person name="Jett J."/>
            <person name="Kadner K."/>
            <person name="Kimball H."/>
            <person name="Kobayashi A."/>
            <person name="Larionov V."/>
            <person name="Leem S.-H."/>
            <person name="Lopez F."/>
            <person name="Lou Y."/>
            <person name="Lowry S."/>
            <person name="Malfatti S."/>
            <person name="Martinez D."/>
            <person name="McCready P.M."/>
            <person name="Medina C."/>
            <person name="Morgan J."/>
            <person name="Nelson K."/>
            <person name="Nolan M."/>
            <person name="Ovcharenko I."/>
            <person name="Pitluck S."/>
            <person name="Pollard M."/>
            <person name="Popkie A.P."/>
            <person name="Predki P."/>
            <person name="Quan G."/>
            <person name="Ramirez L."/>
            <person name="Rash S."/>
            <person name="Retterer J."/>
            <person name="Rodriguez A."/>
            <person name="Rogers S."/>
            <person name="Salamov A."/>
            <person name="Salazar A."/>
            <person name="She X."/>
            <person name="Smith D."/>
            <person name="Slezak T."/>
            <person name="Solovyev V."/>
            <person name="Thayer N."/>
            <person name="Tice H."/>
            <person name="Tsai M."/>
            <person name="Ustaszewska A."/>
            <person name="Vo N."/>
            <person name="Wagner M."/>
            <person name="Wheeler J."/>
            <person name="Wu K."/>
            <person name="Xie G."/>
            <person name="Yang J."/>
            <person name="Dubchak I."/>
            <person name="Furey T.S."/>
            <person name="DeJong P."/>
            <person name="Dickson M."/>
            <person name="Gordon D."/>
            <person name="Eichler E.E."/>
            <person name="Pennacchio L.A."/>
            <person name="Richardson P."/>
            <person name="Stubbs L."/>
            <person name="Rokhsar D.S."/>
            <person name="Myers R.M."/>
            <person name="Rubin E.M."/>
            <person name="Lucas S.M."/>
        </authorList>
    </citation>
    <scope>NUCLEOTIDE SEQUENCE [LARGE SCALE GENOMIC DNA]</scope>
</reference>
<reference key="3">
    <citation type="journal article" date="2010" name="Hum. Mol. Genet.">
        <title>Recessively inherited right atrial isomerism caused by mutations in growth/differentiation factor 1 (GDF1).</title>
        <authorList>
            <person name="Kaasinen E."/>
            <person name="Aittomaki K."/>
            <person name="Eronen M."/>
            <person name="Vahteristo P."/>
            <person name="Karhu A."/>
            <person name="Mecklin J.P."/>
            <person name="Kajantie E."/>
            <person name="Aaltonen L.A."/>
            <person name="Lehtonen R."/>
        </authorList>
    </citation>
    <scope>INVOLVEMENT IN RAI</scope>
    <scope>VARIANT RAI 227-CYS--ARG-372 DEL</scope>
</reference>
<reference key="4">
    <citation type="journal article" date="2007" name="Am. J. Hum. Genet.">
        <title>Loss-of-function mutations in growth differentiation factor-1 (GDF1) are associated with congenital heart defects in humans.</title>
        <authorList>
            <person name="Karkera J.D."/>
            <person name="Lee J.S."/>
            <person name="Roessler E."/>
            <person name="Banerjee-Basu S."/>
            <person name="Ouspenskaia M.V."/>
            <person name="Mez J."/>
            <person name="Goldmuntz E."/>
            <person name="Bowers P."/>
            <person name="Towbin J."/>
            <person name="Belmont J.W."/>
            <person name="Baxevanis A.D."/>
            <person name="Schier A.F."/>
            <person name="Muenke M."/>
        </authorList>
    </citation>
    <scope>INVOLVEMENT IN CHTD6</scope>
    <scope>VARIANTS CHTD6 227-CYS--ARG-372 DEL AND THR-318</scope>
    <scope>VARIANTS TOF ASP-162; PRO-309 AND THR-312</scope>
    <scope>VARIANT CTHM TYR-267</scope>
    <scope>VARIANTS HIS-68 AND SER-262</scope>
</reference>
<reference key="5">
    <citation type="journal article" date="2017" name="Nat. Genet.">
        <title>Contribution of rare inherited and de novo variants in 2,871 congenital heart disease probands.</title>
        <authorList>
            <person name="Jin S.C."/>
            <person name="Homsy J."/>
            <person name="Zaidi S."/>
            <person name="Lu Q."/>
            <person name="Morton S."/>
            <person name="DePalma S.R."/>
            <person name="Zeng X."/>
            <person name="Qi H."/>
            <person name="Chang W."/>
            <person name="Sierant M.C."/>
            <person name="Hung W.C."/>
            <person name="Haider S."/>
            <person name="Zhang J."/>
            <person name="Knight J."/>
            <person name="Bjornson R.D."/>
            <person name="Castaldi C."/>
            <person name="Tikhonoa I.R."/>
            <person name="Bilguvar K."/>
            <person name="Mane S.M."/>
            <person name="Sanders S.J."/>
            <person name="Mital S."/>
            <person name="Russell M.W."/>
            <person name="Gaynor J.W."/>
            <person name="Deanfield J."/>
            <person name="Giardini A."/>
            <person name="Porter G.A. Jr."/>
            <person name="Srivastava D."/>
            <person name="Lo C.W."/>
            <person name="Shen Y."/>
            <person name="Watkins W.S."/>
            <person name="Yandell M."/>
            <person name="Yost H.J."/>
            <person name="Tristani-Firouzi M."/>
            <person name="Newburger J.W."/>
            <person name="Roberts A.E."/>
            <person name="Kim R."/>
            <person name="Zhao H."/>
            <person name="Kaltman J.R."/>
            <person name="Goldmuntz E."/>
            <person name="Chung W.K."/>
            <person name="Seidman J.G."/>
            <person name="Gelb B.D."/>
            <person name="Seidman C.E."/>
            <person name="Lifton R.P."/>
            <person name="Brueckner M."/>
        </authorList>
    </citation>
    <scope>INVOLVEMENT IN CHTD6</scope>
    <scope>VARIANT CHTD6 THR-364</scope>
    <scope>VARIANTS RAI 227-CYS--ARG-372 DEL AND MET-364 DEL</scope>
</reference>
<name>GDF1_HUMAN</name>
<sequence>MPPPQQGPCGHHLLLLLALLLPSLPLTRAPVPPGPAAALLQALGLRDEPQGAPRLRPVPPVMWRLFRRRDPQETRSGSRRTSPGVTLQPCHVEELGVAGNIVRHIPDRGAPTRASEPASAAGHCPEWTVVFDLSAVEPAERPSRARLELRFAAAAAAAPEGGWELSVAQAGQGAGADPGPVLLRQLVPALGPPVRAELLGAAWARNASWPRSLRLALALRPRAPAACARLAEASLLLVTLDPRLCHPLARPRRDAEPVLGGGPGGACRARRLYVSFREVGWHRWVIAPRGFLANYCQGQCALPVALSGSGGPPALNHAVLRALMHAAAPGAADLPCCVPARLSPISVLFFDNSDNVVLRQYEDMVVDECGCR</sequence>
<feature type="signal peptide" evidence="2">
    <location>
        <begin position="1"/>
        <end position="29"/>
    </location>
</feature>
<feature type="propeptide" id="PRO_0000033898" evidence="2">
    <location>
        <begin position="30"/>
        <end position="253"/>
    </location>
</feature>
<feature type="chain" id="PRO_0000033899" description="Embryonic growth/differentiation factor 1">
    <location>
        <begin position="254"/>
        <end position="372"/>
    </location>
</feature>
<feature type="region of interest" description="Disordered" evidence="3">
    <location>
        <begin position="67"/>
        <end position="86"/>
    </location>
</feature>
<feature type="glycosylation site" description="N-linked (GlcNAc...) asparagine" evidence="2">
    <location>
        <position position="206"/>
    </location>
</feature>
<feature type="disulfide bond" evidence="1">
    <location>
        <begin position="267"/>
        <end position="337"/>
    </location>
</feature>
<feature type="disulfide bond" evidence="1">
    <location>
        <begin position="296"/>
        <end position="369"/>
    </location>
</feature>
<feature type="disulfide bond" evidence="1">
    <location>
        <begin position="300"/>
        <end position="371"/>
    </location>
</feature>
<feature type="disulfide bond" description="Interchain" evidence="1">
    <location>
        <position position="336"/>
    </location>
</feature>
<feature type="sequence variant" id="VAR_065332" description="Found in a patient with atrioventricular canal-cleft mitral valve; uncertain significance; dbSNP:rs763822282." evidence="4">
    <original>R</original>
    <variation>H</variation>
    <location>
        <position position="68"/>
    </location>
</feature>
<feature type="sequence variant" id="VAR_028274" description="In dbSNP:rs4808863." evidence="5">
    <original>A</original>
    <variation>V</variation>
    <location>
        <position position="118"/>
    </location>
</feature>
<feature type="sequence variant" id="VAR_065333" description="In TOF; dbSNP:rs121434424." evidence="4">
    <original>G</original>
    <variation>D</variation>
    <location>
        <position position="162"/>
    </location>
</feature>
<feature type="sequence variant" id="VAR_080779" description="In CHTD6 and RAI." evidence="4 6 7">
    <location>
        <begin position="227"/>
        <end position="372"/>
    </location>
</feature>
<feature type="sequence variant" id="VAR_065334" description="In a patient with Rastelli type atrioventricular canal." evidence="4">
    <original>G</original>
    <variation>S</variation>
    <location>
        <position position="262"/>
    </location>
</feature>
<feature type="sequence variant" id="VAR_065335" description="In CTHM; double-outlet right ventricle; dbSNP:rs121434423." evidence="4">
    <original>C</original>
    <variation>Y</variation>
    <location>
        <position position="267"/>
    </location>
</feature>
<feature type="sequence variant" id="VAR_065336" description="In TOF; dbSNP:rs864622513." evidence="4">
    <original>S</original>
    <variation>P</variation>
    <location>
        <position position="309"/>
    </location>
</feature>
<feature type="sequence variant" id="VAR_065337" description="In TOF." evidence="4">
    <original>P</original>
    <variation>T</variation>
    <location>
        <position position="312"/>
    </location>
</feature>
<feature type="sequence variant" id="VAR_065338" description="In CHTD6; dbSNP:rs1064793138." evidence="4">
    <original>A</original>
    <variation>T</variation>
    <location>
        <position position="318"/>
    </location>
</feature>
<feature type="sequence variant" id="VAR_080780" description="In CHTD6; dbSNP:rs374016704." evidence="7">
    <original>M</original>
    <variation>T</variation>
    <location>
        <position position="364"/>
    </location>
</feature>
<feature type="sequence variant" id="VAR_080781" description="In RAI; dbSNP:rs753643819." evidence="7">
    <location>
        <position position="364"/>
    </location>
</feature>
<proteinExistence type="evidence at protein level"/>
<organism>
    <name type="scientific">Homo sapiens</name>
    <name type="common">Human</name>
    <dbReference type="NCBI Taxonomy" id="9606"/>
    <lineage>
        <taxon>Eukaryota</taxon>
        <taxon>Metazoa</taxon>
        <taxon>Chordata</taxon>
        <taxon>Craniata</taxon>
        <taxon>Vertebrata</taxon>
        <taxon>Euteleostomi</taxon>
        <taxon>Mammalia</taxon>
        <taxon>Eutheria</taxon>
        <taxon>Euarchontoglires</taxon>
        <taxon>Primates</taxon>
        <taxon>Haplorrhini</taxon>
        <taxon>Catarrhini</taxon>
        <taxon>Hominidae</taxon>
        <taxon>Homo</taxon>
    </lineage>
</organism>
<accession>P27539</accession>
<accession>O43344</accession>
<protein>
    <recommendedName>
        <fullName>Embryonic growth/differentiation factor 1</fullName>
        <shortName>GDF-1</shortName>
    </recommendedName>
</protein>
<gene>
    <name type="primary">GDF1</name>
</gene>
<dbReference type="EMBL" id="M62302">
    <property type="protein sequence ID" value="AAA58501.1"/>
    <property type="molecule type" value="mRNA"/>
</dbReference>
<dbReference type="EMBL" id="AC003972">
    <property type="protein sequence ID" value="AAB94786.1"/>
    <property type="molecule type" value="Genomic_DNA"/>
</dbReference>
<dbReference type="CCDS" id="CCDS42526.1"/>
<dbReference type="PIR" id="C39364">
    <property type="entry name" value="C39364"/>
</dbReference>
<dbReference type="RefSeq" id="NP_001374367.1">
    <property type="nucleotide sequence ID" value="NM_001387438.1"/>
</dbReference>
<dbReference type="RefSeq" id="NP_001483.3">
    <property type="nucleotide sequence ID" value="NM_001492.5"/>
</dbReference>
<dbReference type="SMR" id="P27539"/>
<dbReference type="BioGRID" id="108927">
    <property type="interactions" value="2"/>
</dbReference>
<dbReference type="FunCoup" id="P27539">
    <property type="interactions" value="420"/>
</dbReference>
<dbReference type="IntAct" id="P27539">
    <property type="interactions" value="1"/>
</dbReference>
<dbReference type="MINT" id="P27539"/>
<dbReference type="STRING" id="9606.ENSP00000247005"/>
<dbReference type="GlyCosmos" id="P27539">
    <property type="glycosylation" value="1 site, No reported glycans"/>
</dbReference>
<dbReference type="GlyGen" id="P27539">
    <property type="glycosylation" value="1 site"/>
</dbReference>
<dbReference type="iPTMnet" id="P27539"/>
<dbReference type="PhosphoSitePlus" id="P27539"/>
<dbReference type="BioMuta" id="GDF1"/>
<dbReference type="DMDM" id="116242492"/>
<dbReference type="PaxDb" id="9606-ENSP00000247005"/>
<dbReference type="Antibodypedia" id="28214">
    <property type="antibodies" value="110 antibodies from 25 providers"/>
</dbReference>
<dbReference type="DNASU" id="2657"/>
<dbReference type="Ensembl" id="ENST00000247005.8">
    <property type="protein sequence ID" value="ENSP00000247005.5"/>
    <property type="gene ID" value="ENSG00000130283.9"/>
</dbReference>
<dbReference type="GeneID" id="2657"/>
<dbReference type="KEGG" id="hsa:2657"/>
<dbReference type="MANE-Select" id="ENST00000247005.8">
    <property type="protein sequence ID" value="ENSP00000247005.5"/>
    <property type="RefSeq nucleotide sequence ID" value="NM_001492.6"/>
    <property type="RefSeq protein sequence ID" value="NP_001483.3"/>
</dbReference>
<dbReference type="UCSC" id="uc060vuk.1">
    <property type="organism name" value="human"/>
</dbReference>
<dbReference type="AGR" id="HGNC:4214"/>
<dbReference type="CTD" id="2657"/>
<dbReference type="DisGeNET" id="2657"/>
<dbReference type="GeneCards" id="GDF1"/>
<dbReference type="HGNC" id="HGNC:4214">
    <property type="gene designation" value="GDF1"/>
</dbReference>
<dbReference type="HPA" id="ENSG00000130283">
    <property type="expression patterns" value="Tissue enriched (brain)"/>
</dbReference>
<dbReference type="MalaCards" id="GDF1"/>
<dbReference type="MIM" id="187500">
    <property type="type" value="phenotype"/>
</dbReference>
<dbReference type="MIM" id="208530">
    <property type="type" value="phenotype"/>
</dbReference>
<dbReference type="MIM" id="217095">
    <property type="type" value="phenotype"/>
</dbReference>
<dbReference type="MIM" id="602880">
    <property type="type" value="gene"/>
</dbReference>
<dbReference type="MIM" id="613854">
    <property type="type" value="phenotype"/>
</dbReference>
<dbReference type="neXtProt" id="NX_P27539"/>
<dbReference type="OpenTargets" id="ENSG00000130283"/>
<dbReference type="Orphanet" id="216718">
    <property type="disease" value="Isolated congenitally uncorrected transposition of the great arteries"/>
</dbReference>
<dbReference type="Orphanet" id="97548">
    <property type="disease" value="Right sided atrial isomerism"/>
</dbReference>
<dbReference type="Orphanet" id="3303">
    <property type="disease" value="Tetralogy of Fallot"/>
</dbReference>
<dbReference type="PharmGKB" id="PA28629"/>
<dbReference type="VEuPathDB" id="HostDB:ENSG00000130283"/>
<dbReference type="eggNOG" id="KOG3900">
    <property type="taxonomic scope" value="Eukaryota"/>
</dbReference>
<dbReference type="GeneTree" id="ENSGT00940000162926"/>
<dbReference type="HOGENOM" id="CLU_020515_4_0_1"/>
<dbReference type="InParanoid" id="P27539"/>
<dbReference type="OMA" id="AGHCPEW"/>
<dbReference type="OrthoDB" id="5987191at2759"/>
<dbReference type="PAN-GO" id="P27539">
    <property type="GO annotations" value="5 GO annotations based on evolutionary models"/>
</dbReference>
<dbReference type="PhylomeDB" id="P27539"/>
<dbReference type="TreeFam" id="TF351789"/>
<dbReference type="PathwayCommons" id="P27539"/>
<dbReference type="Reactome" id="R-HSA-1181150">
    <property type="pathway name" value="Signaling by NODAL"/>
</dbReference>
<dbReference type="SignaLink" id="P27539"/>
<dbReference type="BioGRID-ORCS" id="2657">
    <property type="hits" value="19 hits in 1118 CRISPR screens"/>
</dbReference>
<dbReference type="GeneWiki" id="GDF1"/>
<dbReference type="GenomeRNAi" id="2657"/>
<dbReference type="Pharos" id="P27539">
    <property type="development level" value="Tbio"/>
</dbReference>
<dbReference type="PRO" id="PR:P27539"/>
<dbReference type="Proteomes" id="UP000005640">
    <property type="component" value="Chromosome 19"/>
</dbReference>
<dbReference type="RNAct" id="P27539">
    <property type="molecule type" value="protein"/>
</dbReference>
<dbReference type="Bgee" id="ENSG00000130283">
    <property type="expression patterns" value="Expressed in primary visual cortex and 31 other cell types or tissues"/>
</dbReference>
<dbReference type="ExpressionAtlas" id="P27539">
    <property type="expression patterns" value="baseline"/>
</dbReference>
<dbReference type="GO" id="GO:0005615">
    <property type="term" value="C:extracellular space"/>
    <property type="evidence" value="ECO:0000318"/>
    <property type="project" value="GO_Central"/>
</dbReference>
<dbReference type="GO" id="GO:0005125">
    <property type="term" value="F:cytokine activity"/>
    <property type="evidence" value="ECO:0000318"/>
    <property type="project" value="GO_Central"/>
</dbReference>
<dbReference type="GO" id="GO:0008083">
    <property type="term" value="F:growth factor activity"/>
    <property type="evidence" value="ECO:0007669"/>
    <property type="project" value="UniProtKB-KW"/>
</dbReference>
<dbReference type="GO" id="GO:0007492">
    <property type="term" value="P:endoderm development"/>
    <property type="evidence" value="ECO:0007669"/>
    <property type="project" value="Ensembl"/>
</dbReference>
<dbReference type="GO" id="GO:0001701">
    <property type="term" value="P:in utero embryonic development"/>
    <property type="evidence" value="ECO:0007669"/>
    <property type="project" value="Ensembl"/>
</dbReference>
<dbReference type="GO" id="GO:0007498">
    <property type="term" value="P:mesoderm development"/>
    <property type="evidence" value="ECO:0007669"/>
    <property type="project" value="Ensembl"/>
</dbReference>
<dbReference type="CDD" id="cd13764">
    <property type="entry name" value="TGF_beta_GDF1_3_like"/>
    <property type="match status" value="1"/>
</dbReference>
<dbReference type="FunFam" id="2.10.90.10:FF:000001">
    <property type="entry name" value="Bone morphogenetic protein 4"/>
    <property type="match status" value="1"/>
</dbReference>
<dbReference type="Gene3D" id="2.10.90.10">
    <property type="entry name" value="Cystine-knot cytokines"/>
    <property type="match status" value="1"/>
</dbReference>
<dbReference type="InterPro" id="IPR029034">
    <property type="entry name" value="Cystine-knot_cytokine"/>
</dbReference>
<dbReference type="InterPro" id="IPR001839">
    <property type="entry name" value="TGF-b_C"/>
</dbReference>
<dbReference type="InterPro" id="IPR015615">
    <property type="entry name" value="TGF-beta-rel"/>
</dbReference>
<dbReference type="InterPro" id="IPR017948">
    <property type="entry name" value="TGFb_CS"/>
</dbReference>
<dbReference type="PANTHER" id="PTHR11848:SF151">
    <property type="entry name" value="EMBRYONIC GROWTH_DIFFERENTIATION FACTOR 1"/>
    <property type="match status" value="1"/>
</dbReference>
<dbReference type="PANTHER" id="PTHR11848">
    <property type="entry name" value="TGF-BETA FAMILY"/>
    <property type="match status" value="1"/>
</dbReference>
<dbReference type="Pfam" id="PF00019">
    <property type="entry name" value="TGF_beta"/>
    <property type="match status" value="1"/>
</dbReference>
<dbReference type="PRINTS" id="PR00669">
    <property type="entry name" value="INHIBINA"/>
</dbReference>
<dbReference type="SMART" id="SM00204">
    <property type="entry name" value="TGFB"/>
    <property type="match status" value="1"/>
</dbReference>
<dbReference type="SUPFAM" id="SSF57501">
    <property type="entry name" value="Cystine-knot cytokines"/>
    <property type="match status" value="1"/>
</dbReference>
<dbReference type="PROSITE" id="PS00250">
    <property type="entry name" value="TGF_BETA_1"/>
    <property type="match status" value="1"/>
</dbReference>
<dbReference type="PROSITE" id="PS51362">
    <property type="entry name" value="TGF_BETA_2"/>
    <property type="match status" value="1"/>
</dbReference>